<comment type="function">
    <text evidence="1">Key component of the proton channel; it plays a direct role in the translocation of protons across the membrane.</text>
</comment>
<comment type="subunit">
    <text evidence="1">F-type ATPases have 2 components, CF(1) - the catalytic core - and CF(0) - the membrane proton channel. CF(1) has five subunits: alpha(3), beta(3), gamma(1), delta(1), epsilon(1). CF(0) has three main subunits: a(1), b(2) and c(9-12). The alpha and beta chains form an alternating ring which encloses part of the gamma chain. CF(1) is attached to CF(0) by a central stalk formed by the gamma and epsilon chains, while a peripheral stalk is formed by the delta and b chains.</text>
</comment>
<comment type="subcellular location">
    <subcellularLocation>
        <location evidence="1">Cell inner membrane</location>
        <topology evidence="1">Multi-pass membrane protein</topology>
    </subcellularLocation>
</comment>
<comment type="similarity">
    <text evidence="1">Belongs to the ATPase A chain family.</text>
</comment>
<keyword id="KW-0066">ATP synthesis</keyword>
<keyword id="KW-0997">Cell inner membrane</keyword>
<keyword id="KW-1003">Cell membrane</keyword>
<keyword id="KW-0138">CF(0)</keyword>
<keyword id="KW-0375">Hydrogen ion transport</keyword>
<keyword id="KW-0406">Ion transport</keyword>
<keyword id="KW-0472">Membrane</keyword>
<keyword id="KW-0812">Transmembrane</keyword>
<keyword id="KW-1133">Transmembrane helix</keyword>
<keyword id="KW-0813">Transport</keyword>
<protein>
    <recommendedName>
        <fullName evidence="1">ATP synthase subunit a</fullName>
    </recommendedName>
    <alternativeName>
        <fullName evidence="1">ATP synthase F0 sector subunit a</fullName>
    </alternativeName>
    <alternativeName>
        <fullName evidence="1">F-ATPase subunit 6</fullName>
    </alternativeName>
</protein>
<feature type="chain" id="PRO_0000362406" description="ATP synthase subunit a">
    <location>
        <begin position="1"/>
        <end position="288"/>
    </location>
</feature>
<feature type="transmembrane region" description="Helical" evidence="1">
    <location>
        <begin position="47"/>
        <end position="67"/>
    </location>
</feature>
<feature type="transmembrane region" description="Helical" evidence="1">
    <location>
        <begin position="104"/>
        <end position="124"/>
    </location>
</feature>
<feature type="transmembrane region" description="Helical" evidence="1">
    <location>
        <begin position="157"/>
        <end position="177"/>
    </location>
</feature>
<feature type="transmembrane region" description="Helical" evidence="1">
    <location>
        <begin position="199"/>
        <end position="219"/>
    </location>
</feature>
<feature type="transmembrane region" description="Helical" evidence="1">
    <location>
        <begin position="237"/>
        <end position="257"/>
    </location>
</feature>
<feature type="transmembrane region" description="Helical" evidence="1">
    <location>
        <begin position="258"/>
        <end position="278"/>
    </location>
</feature>
<organism>
    <name type="scientific">Psychrobacter sp. (strain PRwf-1)</name>
    <dbReference type="NCBI Taxonomy" id="349106"/>
    <lineage>
        <taxon>Bacteria</taxon>
        <taxon>Pseudomonadati</taxon>
        <taxon>Pseudomonadota</taxon>
        <taxon>Gammaproteobacteria</taxon>
        <taxon>Moraxellales</taxon>
        <taxon>Moraxellaceae</taxon>
        <taxon>Psychrobacter</taxon>
    </lineage>
</organism>
<name>ATP6_PSYWF</name>
<reference key="1">
    <citation type="submission" date="2007-05" db="EMBL/GenBank/DDBJ databases">
        <title>Complete sequence of chromosome of Psychrobacter sp. PRwf-1.</title>
        <authorList>
            <consortium name="US DOE Joint Genome Institute"/>
            <person name="Copeland A."/>
            <person name="Lucas S."/>
            <person name="Lapidus A."/>
            <person name="Barry K."/>
            <person name="Detter J.C."/>
            <person name="Glavina del Rio T."/>
            <person name="Hammon N."/>
            <person name="Israni S."/>
            <person name="Dalin E."/>
            <person name="Tice H."/>
            <person name="Pitluck S."/>
            <person name="Chain P."/>
            <person name="Malfatti S."/>
            <person name="Shin M."/>
            <person name="Vergez L."/>
            <person name="Schmutz J."/>
            <person name="Larimer F."/>
            <person name="Land M."/>
            <person name="Hauser L."/>
            <person name="Kyrpides N."/>
            <person name="Kim E."/>
            <person name="Tiedje J."/>
            <person name="Richardson P."/>
        </authorList>
    </citation>
    <scope>NUCLEOTIDE SEQUENCE [LARGE SCALE GENOMIC DNA]</scope>
    <source>
        <strain>PRwf-1</strain>
    </source>
</reference>
<evidence type="ECO:0000255" key="1">
    <source>
        <dbReference type="HAMAP-Rule" id="MF_01393"/>
    </source>
</evidence>
<dbReference type="EMBL" id="CP000713">
    <property type="protein sequence ID" value="ABQ93146.1"/>
    <property type="molecule type" value="Genomic_DNA"/>
</dbReference>
<dbReference type="SMR" id="A5WBV5"/>
<dbReference type="STRING" id="349106.PsycPRwf_0187"/>
<dbReference type="KEGG" id="prw:PsycPRwf_0187"/>
<dbReference type="eggNOG" id="COG0356">
    <property type="taxonomic scope" value="Bacteria"/>
</dbReference>
<dbReference type="HOGENOM" id="CLU_041018_1_0_6"/>
<dbReference type="GO" id="GO:0005886">
    <property type="term" value="C:plasma membrane"/>
    <property type="evidence" value="ECO:0007669"/>
    <property type="project" value="UniProtKB-SubCell"/>
</dbReference>
<dbReference type="GO" id="GO:0045259">
    <property type="term" value="C:proton-transporting ATP synthase complex"/>
    <property type="evidence" value="ECO:0007669"/>
    <property type="project" value="UniProtKB-KW"/>
</dbReference>
<dbReference type="GO" id="GO:0046933">
    <property type="term" value="F:proton-transporting ATP synthase activity, rotational mechanism"/>
    <property type="evidence" value="ECO:0007669"/>
    <property type="project" value="UniProtKB-UniRule"/>
</dbReference>
<dbReference type="GO" id="GO:0042777">
    <property type="term" value="P:proton motive force-driven plasma membrane ATP synthesis"/>
    <property type="evidence" value="ECO:0007669"/>
    <property type="project" value="TreeGrafter"/>
</dbReference>
<dbReference type="CDD" id="cd00310">
    <property type="entry name" value="ATP-synt_Fo_a_6"/>
    <property type="match status" value="1"/>
</dbReference>
<dbReference type="FunFam" id="1.20.120.220:FF:000002">
    <property type="entry name" value="ATP synthase subunit a"/>
    <property type="match status" value="1"/>
</dbReference>
<dbReference type="Gene3D" id="1.20.120.220">
    <property type="entry name" value="ATP synthase, F0 complex, subunit A"/>
    <property type="match status" value="1"/>
</dbReference>
<dbReference type="HAMAP" id="MF_01393">
    <property type="entry name" value="ATP_synth_a_bact"/>
    <property type="match status" value="1"/>
</dbReference>
<dbReference type="InterPro" id="IPR045082">
    <property type="entry name" value="ATP_syn_F0_a_bact/chloroplast"/>
</dbReference>
<dbReference type="InterPro" id="IPR000568">
    <property type="entry name" value="ATP_synth_F0_asu"/>
</dbReference>
<dbReference type="InterPro" id="IPR023011">
    <property type="entry name" value="ATP_synth_F0_asu_AS"/>
</dbReference>
<dbReference type="InterPro" id="IPR035908">
    <property type="entry name" value="F0_ATP_A_sf"/>
</dbReference>
<dbReference type="NCBIfam" id="TIGR01131">
    <property type="entry name" value="ATP_synt_6_or_A"/>
    <property type="match status" value="1"/>
</dbReference>
<dbReference type="NCBIfam" id="NF004477">
    <property type="entry name" value="PRK05815.1-1"/>
    <property type="match status" value="1"/>
</dbReference>
<dbReference type="PANTHER" id="PTHR42823">
    <property type="entry name" value="ATP SYNTHASE SUBUNIT A, CHLOROPLASTIC"/>
    <property type="match status" value="1"/>
</dbReference>
<dbReference type="PANTHER" id="PTHR42823:SF3">
    <property type="entry name" value="ATP SYNTHASE SUBUNIT A, CHLOROPLASTIC"/>
    <property type="match status" value="1"/>
</dbReference>
<dbReference type="Pfam" id="PF00119">
    <property type="entry name" value="ATP-synt_A"/>
    <property type="match status" value="1"/>
</dbReference>
<dbReference type="SUPFAM" id="SSF81336">
    <property type="entry name" value="F1F0 ATP synthase subunit A"/>
    <property type="match status" value="1"/>
</dbReference>
<dbReference type="PROSITE" id="PS00449">
    <property type="entry name" value="ATPASE_A"/>
    <property type="match status" value="1"/>
</dbReference>
<sequence>MAAEITSTDYIAHHLTNWTYGYLPGEGWKVAHTAKEAGEMGFMAIHLDSMLWSIGLGIVFCALFWLVAKKATAGVPGKLQAAIEMIVEFVDTNVRDSYNGTSKLIAPLALTIFVWIFLMNLMDLMPIDYIPVLAQKVGAAMGHDPHHVFFKIVPTTDPNITLGMSFSVFALIIYYSIKEKGLGGFVGELTLHPFSAKNPIAKIILIPINFILEFVTLIAKPISLGLRLFGNMYAGELIFVLIALMPFWIQWALSVPWAIFHILIITLQAFVFMMLTIVYLSLASQTEH</sequence>
<proteinExistence type="inferred from homology"/>
<accession>A5WBV5</accession>
<gene>
    <name evidence="1" type="primary">atpB</name>
    <name type="ordered locus">PsycPRwf_0187</name>
</gene>